<keyword id="KW-0028">Amino-acid biosynthesis</keyword>
<keyword id="KW-0963">Cytoplasm</keyword>
<keyword id="KW-1017">Isopeptide bond</keyword>
<keyword id="KW-0554">One-carbon metabolism</keyword>
<keyword id="KW-0663">Pyridoxal phosphate</keyword>
<keyword id="KW-1185">Reference proteome</keyword>
<keyword id="KW-0808">Transferase</keyword>
<keyword id="KW-0832">Ubl conjugation</keyword>
<feature type="chain" id="PRO_0000396814" description="Serine hydroxymethyltransferase">
    <location>
        <begin position="1"/>
        <end position="490"/>
    </location>
</feature>
<feature type="binding site" evidence="1">
    <location>
        <position position="179"/>
    </location>
    <ligand>
        <name>(6S)-5,6,7,8-tetrahydrofolate</name>
        <dbReference type="ChEBI" id="CHEBI:57453"/>
    </ligand>
</feature>
<feature type="binding site" evidence="1">
    <location>
        <begin position="183"/>
        <end position="185"/>
    </location>
    <ligand>
        <name>(6S)-5,6,7,8-tetrahydrofolate</name>
        <dbReference type="ChEBI" id="CHEBI:57453"/>
    </ligand>
</feature>
<feature type="site" description="Plays an important role in substrate specificity" evidence="1">
    <location>
        <position position="290"/>
    </location>
</feature>
<feature type="modified residue" description="N6-(pyridoxal phosphate)lysine" evidence="1">
    <location>
        <position position="291"/>
    </location>
</feature>
<feature type="cross-link" description="Isoglutamyl lysine isopeptide (Lys-Gln) (interchain with Q-Cter in protein Pup)" evidence="2">
    <location>
        <position position="362"/>
    </location>
</feature>
<sequence length="490" mass="51904">MAADPSSNSSSVPAANGADYADTASAAYQAALQVIESVEPRVAAATRKELADQRDSLKLIASENYASPAVLLTMGTWFSDKYAEGTIGHRFYAGCQNVDTVESVAAEHARELFGAPYAYVQPHSGIDANLVAFWAILATRVEAPELANFGAKHINDLSEADWETLRNKLGNQRLLGMSLDAGGHLTHGFRPNISGKMFHQRSYGTNPETGFLDYDAVAAAAREFKPLVLVAGYSAYPRRVNFAKMREIADEVGATLMVDMAHFAGLVAGKVFTGDEDPVPHAHVTTTTTHKSLRGPRGGMVLATEEYAPAVDKGCPMVLGGPLSHVMAAKAVALAEARQPAFQQYAQQVADNAQALADGFVKRDAGLVTGGTDNHIVLLDVTSFGLTGRQAESALLDAGIVTNRNSIPADPNGAWYTSGVRLGTPALTSRGFGADDFDRVAELIVEVLANTQPEGTSKAKYKLADGTAERVHAASSELLSANPLYPGLTL</sequence>
<comment type="function">
    <text evidence="1">Catalyzes the reversible interconversion of serine and glycine with tetrahydrofolate (THF) serving as the one-carbon carrier. This reaction serves as the major source of one-carbon groups required for the biosynthesis of purines, thymidylate, methionine, and other important biomolecules. Also exhibits THF-independent aldolase activity toward beta-hydroxyamino acids, producing glycine and aldehydes, via a retro-aldol mechanism.</text>
</comment>
<comment type="catalytic activity">
    <reaction evidence="1">
        <text>(6R)-5,10-methylene-5,6,7,8-tetrahydrofolate + glycine + H2O = (6S)-5,6,7,8-tetrahydrofolate + L-serine</text>
        <dbReference type="Rhea" id="RHEA:15481"/>
        <dbReference type="ChEBI" id="CHEBI:15377"/>
        <dbReference type="ChEBI" id="CHEBI:15636"/>
        <dbReference type="ChEBI" id="CHEBI:33384"/>
        <dbReference type="ChEBI" id="CHEBI:57305"/>
        <dbReference type="ChEBI" id="CHEBI:57453"/>
        <dbReference type="EC" id="2.1.2.1"/>
    </reaction>
</comment>
<comment type="cofactor">
    <cofactor evidence="1">
        <name>pyridoxal 5'-phosphate</name>
        <dbReference type="ChEBI" id="CHEBI:597326"/>
    </cofactor>
</comment>
<comment type="pathway">
    <text evidence="1">One-carbon metabolism; tetrahydrofolate interconversion.</text>
</comment>
<comment type="pathway">
    <text evidence="1">Amino-acid biosynthesis; glycine biosynthesis; glycine from L-serine: step 1/1.</text>
</comment>
<comment type="subunit">
    <text evidence="1">Homodimer.</text>
</comment>
<comment type="subcellular location">
    <subcellularLocation>
        <location evidence="1">Cytoplasm</location>
    </subcellularLocation>
</comment>
<comment type="similarity">
    <text evidence="1">Belongs to the SHMT family.</text>
</comment>
<reference key="1">
    <citation type="submission" date="2006-10" db="EMBL/GenBank/DDBJ databases">
        <authorList>
            <person name="Fleischmann R.D."/>
            <person name="Dodson R.J."/>
            <person name="Haft D.H."/>
            <person name="Merkel J.S."/>
            <person name="Nelson W.C."/>
            <person name="Fraser C.M."/>
        </authorList>
    </citation>
    <scope>NUCLEOTIDE SEQUENCE [LARGE SCALE GENOMIC DNA]</scope>
    <source>
        <strain>ATCC 700084 / mc(2)155</strain>
    </source>
</reference>
<reference key="2">
    <citation type="journal article" date="2007" name="Genome Biol.">
        <title>Interrupted coding sequences in Mycobacterium smegmatis: authentic mutations or sequencing errors?</title>
        <authorList>
            <person name="Deshayes C."/>
            <person name="Perrodou E."/>
            <person name="Gallien S."/>
            <person name="Euphrasie D."/>
            <person name="Schaeffer C."/>
            <person name="Van-Dorsselaer A."/>
            <person name="Poch O."/>
            <person name="Lecompte O."/>
            <person name="Reyrat J.-M."/>
        </authorList>
    </citation>
    <scope>NUCLEOTIDE SEQUENCE [LARGE SCALE GENOMIC DNA]</scope>
    <source>
        <strain>ATCC 700084 / mc(2)155</strain>
    </source>
</reference>
<reference key="3">
    <citation type="journal article" date="2009" name="Genome Res.">
        <title>Ortho-proteogenomics: multiple proteomes investigation through orthology and a new MS-based protocol.</title>
        <authorList>
            <person name="Gallien S."/>
            <person name="Perrodou E."/>
            <person name="Carapito C."/>
            <person name="Deshayes C."/>
            <person name="Reyrat J.-M."/>
            <person name="Van Dorsselaer A."/>
            <person name="Poch O."/>
            <person name="Schaeffer C."/>
            <person name="Lecompte O."/>
        </authorList>
    </citation>
    <scope>NUCLEOTIDE SEQUENCE [LARGE SCALE GENOMIC DNA]</scope>
    <source>
        <strain>ATCC 700084 / mc(2)155</strain>
    </source>
</reference>
<reference key="4">
    <citation type="journal article" date="2010" name="Mol. Biosyst.">
        <title>Expansion of the mycobacterial 'PUPylome'.</title>
        <authorList>
            <person name="Watrous J."/>
            <person name="Burns K."/>
            <person name="Liu W.T."/>
            <person name="Patel A."/>
            <person name="Hook V."/>
            <person name="Bafna V."/>
            <person name="Barry C.E. III"/>
            <person name="Bark S."/>
            <person name="Dorrestein P.C."/>
        </authorList>
    </citation>
    <scope>PUPYLATION AT LYS-362</scope>
    <scope>IDENTIFICATION BY MASS SPECTROMETRY</scope>
</reference>
<accession>A0R2V7</accession>
<accession>I7FJP8</accession>
<organism>
    <name type="scientific">Mycolicibacterium smegmatis (strain ATCC 700084 / mc(2)155)</name>
    <name type="common">Mycobacterium smegmatis</name>
    <dbReference type="NCBI Taxonomy" id="246196"/>
    <lineage>
        <taxon>Bacteria</taxon>
        <taxon>Bacillati</taxon>
        <taxon>Actinomycetota</taxon>
        <taxon>Actinomycetes</taxon>
        <taxon>Mycobacteriales</taxon>
        <taxon>Mycobacteriaceae</taxon>
        <taxon>Mycolicibacterium</taxon>
    </lineage>
</organism>
<name>GLYA_MYCS2</name>
<evidence type="ECO:0000255" key="1">
    <source>
        <dbReference type="HAMAP-Rule" id="MF_00051"/>
    </source>
</evidence>
<evidence type="ECO:0000269" key="2">
    <source>
    </source>
</evidence>
<gene>
    <name evidence="1" type="primary">glyA</name>
    <name type="ordered locus">MSMEG_5249</name>
    <name type="ordered locus">MSMEI_5111</name>
</gene>
<dbReference type="EC" id="2.1.2.1" evidence="1"/>
<dbReference type="EMBL" id="CP000480">
    <property type="protein sequence ID" value="ABK71001.1"/>
    <property type="molecule type" value="Genomic_DNA"/>
</dbReference>
<dbReference type="EMBL" id="CP001663">
    <property type="protein sequence ID" value="AFP41555.1"/>
    <property type="molecule type" value="Genomic_DNA"/>
</dbReference>
<dbReference type="RefSeq" id="WP_011730415.1">
    <property type="nucleotide sequence ID" value="NZ_SIJM01000014.1"/>
</dbReference>
<dbReference type="RefSeq" id="YP_889495.1">
    <property type="nucleotide sequence ID" value="NC_008596.1"/>
</dbReference>
<dbReference type="SMR" id="A0R2V7"/>
<dbReference type="STRING" id="246196.MSMEG_5249"/>
<dbReference type="PaxDb" id="246196-MSMEI_5111"/>
<dbReference type="KEGG" id="msb:LJ00_25960"/>
<dbReference type="KEGG" id="msg:MSMEI_5111"/>
<dbReference type="KEGG" id="msm:MSMEG_5249"/>
<dbReference type="PATRIC" id="fig|246196.19.peg.5120"/>
<dbReference type="eggNOG" id="COG0112">
    <property type="taxonomic scope" value="Bacteria"/>
</dbReference>
<dbReference type="OrthoDB" id="9803846at2"/>
<dbReference type="UniPathway" id="UPA00193"/>
<dbReference type="UniPathway" id="UPA00288">
    <property type="reaction ID" value="UER01023"/>
</dbReference>
<dbReference type="Proteomes" id="UP000000757">
    <property type="component" value="Chromosome"/>
</dbReference>
<dbReference type="Proteomes" id="UP000006158">
    <property type="component" value="Chromosome"/>
</dbReference>
<dbReference type="GO" id="GO:0005829">
    <property type="term" value="C:cytosol"/>
    <property type="evidence" value="ECO:0007669"/>
    <property type="project" value="TreeGrafter"/>
</dbReference>
<dbReference type="GO" id="GO:0004372">
    <property type="term" value="F:glycine hydroxymethyltransferase activity"/>
    <property type="evidence" value="ECO:0007669"/>
    <property type="project" value="UniProtKB-UniRule"/>
</dbReference>
<dbReference type="GO" id="GO:0030170">
    <property type="term" value="F:pyridoxal phosphate binding"/>
    <property type="evidence" value="ECO:0007669"/>
    <property type="project" value="UniProtKB-UniRule"/>
</dbReference>
<dbReference type="GO" id="GO:0019264">
    <property type="term" value="P:glycine biosynthetic process from serine"/>
    <property type="evidence" value="ECO:0007669"/>
    <property type="project" value="UniProtKB-UniRule"/>
</dbReference>
<dbReference type="GO" id="GO:0035999">
    <property type="term" value="P:tetrahydrofolate interconversion"/>
    <property type="evidence" value="ECO:0007669"/>
    <property type="project" value="UniProtKB-UniRule"/>
</dbReference>
<dbReference type="CDD" id="cd00378">
    <property type="entry name" value="SHMT"/>
    <property type="match status" value="1"/>
</dbReference>
<dbReference type="FunFam" id="3.40.640.10:FF:000060">
    <property type="entry name" value="Serine hydroxymethyltransferase"/>
    <property type="match status" value="1"/>
</dbReference>
<dbReference type="FunFam" id="3.40.640.10:FF:000065">
    <property type="entry name" value="Serine hydroxymethyltransferase"/>
    <property type="match status" value="1"/>
</dbReference>
<dbReference type="Gene3D" id="3.90.1150.10">
    <property type="entry name" value="Aspartate Aminotransferase, domain 1"/>
    <property type="match status" value="2"/>
</dbReference>
<dbReference type="Gene3D" id="3.40.640.10">
    <property type="entry name" value="Type I PLP-dependent aspartate aminotransferase-like (Major domain)"/>
    <property type="match status" value="2"/>
</dbReference>
<dbReference type="HAMAP" id="MF_00051">
    <property type="entry name" value="SHMT"/>
    <property type="match status" value="1"/>
</dbReference>
<dbReference type="InterPro" id="IPR015424">
    <property type="entry name" value="PyrdxlP-dep_Trfase"/>
</dbReference>
<dbReference type="InterPro" id="IPR015421">
    <property type="entry name" value="PyrdxlP-dep_Trfase_major"/>
</dbReference>
<dbReference type="InterPro" id="IPR015422">
    <property type="entry name" value="PyrdxlP-dep_Trfase_small"/>
</dbReference>
<dbReference type="InterPro" id="IPR001085">
    <property type="entry name" value="Ser_HO-MeTrfase"/>
</dbReference>
<dbReference type="InterPro" id="IPR049943">
    <property type="entry name" value="Ser_HO-MeTrfase-like"/>
</dbReference>
<dbReference type="InterPro" id="IPR019798">
    <property type="entry name" value="Ser_HO-MeTrfase_PLP_BS"/>
</dbReference>
<dbReference type="InterPro" id="IPR039429">
    <property type="entry name" value="SHMT-like_dom"/>
</dbReference>
<dbReference type="NCBIfam" id="NF000586">
    <property type="entry name" value="PRK00011.1"/>
    <property type="match status" value="1"/>
</dbReference>
<dbReference type="NCBIfam" id="NF010094">
    <property type="entry name" value="PRK13580.1"/>
    <property type="match status" value="1"/>
</dbReference>
<dbReference type="PANTHER" id="PTHR11680">
    <property type="entry name" value="SERINE HYDROXYMETHYLTRANSFERASE"/>
    <property type="match status" value="1"/>
</dbReference>
<dbReference type="PANTHER" id="PTHR11680:SF35">
    <property type="entry name" value="SERINE HYDROXYMETHYLTRANSFERASE 1"/>
    <property type="match status" value="1"/>
</dbReference>
<dbReference type="Pfam" id="PF00464">
    <property type="entry name" value="SHMT"/>
    <property type="match status" value="2"/>
</dbReference>
<dbReference type="PIRSF" id="PIRSF000412">
    <property type="entry name" value="SHMT"/>
    <property type="match status" value="1"/>
</dbReference>
<dbReference type="SUPFAM" id="SSF53383">
    <property type="entry name" value="PLP-dependent transferases"/>
    <property type="match status" value="1"/>
</dbReference>
<dbReference type="PROSITE" id="PS00096">
    <property type="entry name" value="SHMT"/>
    <property type="match status" value="1"/>
</dbReference>
<protein>
    <recommendedName>
        <fullName evidence="1">Serine hydroxymethyltransferase</fullName>
        <shortName evidence="1">SHMT</shortName>
        <shortName evidence="1">Serine methylase</shortName>
        <ecNumber evidence="1">2.1.2.1</ecNumber>
    </recommendedName>
</protein>
<proteinExistence type="evidence at protein level"/>